<comment type="function">
    <text evidence="1">Catalyzes the phosphorylation of pantothenate (Pan), the first step in CoA biosynthesis.</text>
</comment>
<comment type="catalytic activity">
    <reaction evidence="1">
        <text>(R)-pantothenate + ATP = (R)-4'-phosphopantothenate + ADP + H(+)</text>
        <dbReference type="Rhea" id="RHEA:16373"/>
        <dbReference type="ChEBI" id="CHEBI:10986"/>
        <dbReference type="ChEBI" id="CHEBI:15378"/>
        <dbReference type="ChEBI" id="CHEBI:29032"/>
        <dbReference type="ChEBI" id="CHEBI:30616"/>
        <dbReference type="ChEBI" id="CHEBI:456216"/>
        <dbReference type="EC" id="2.7.1.33"/>
    </reaction>
</comment>
<comment type="cofactor">
    <cofactor evidence="1">
        <name>NH4(+)</name>
        <dbReference type="ChEBI" id="CHEBI:28938"/>
    </cofactor>
    <cofactor evidence="1">
        <name>K(+)</name>
        <dbReference type="ChEBI" id="CHEBI:29103"/>
    </cofactor>
    <text evidence="1">A monovalent cation. Ammonium or potassium.</text>
</comment>
<comment type="pathway">
    <text evidence="1">Cofactor biosynthesis; coenzyme A biosynthesis; CoA from (R)-pantothenate: step 1/5.</text>
</comment>
<comment type="subunit">
    <text evidence="1">Homodimer.</text>
</comment>
<comment type="subcellular location">
    <subcellularLocation>
        <location evidence="1">Cytoplasm</location>
    </subcellularLocation>
</comment>
<comment type="similarity">
    <text evidence="1">Belongs to the type III pantothenate kinase family.</text>
</comment>
<sequence>MLLTIDVGNTHTVLGLFDGEDIVEHWRISTDSRRTADELAVLLQGLMGMHPLLGDELGDGIDGIAICATVPSVLHELREVTRRYYGDVPAVLVEPGVKTGVPILTDHPKEVGADRIINAVAAVELYGGPAIVVDFGTATTFDAVSARGEYIGGVIAPGIEISVEALGVKGAQLRKIEVARPRSVIGKNTVEAMQSGIVYGFAGQVDGVVNRMARELADDPDDVTVIATGGLAPMVLGESSVIDEHEPWLTLMGLRLVYERNVSRM</sequence>
<gene>
    <name evidence="1" type="primary">coaX</name>
    <name type="ordered locus">SCO3380</name>
    <name type="ORF">SCE94.31c</name>
</gene>
<keyword id="KW-0067">ATP-binding</keyword>
<keyword id="KW-0173">Coenzyme A biosynthesis</keyword>
<keyword id="KW-0963">Cytoplasm</keyword>
<keyword id="KW-0418">Kinase</keyword>
<keyword id="KW-0479">Metal-binding</keyword>
<keyword id="KW-0547">Nucleotide-binding</keyword>
<keyword id="KW-0630">Potassium</keyword>
<keyword id="KW-1185">Reference proteome</keyword>
<keyword id="KW-0808">Transferase</keyword>
<protein>
    <recommendedName>
        <fullName evidence="1">Type III pantothenate kinase</fullName>
        <ecNumber evidence="1">2.7.1.33</ecNumber>
    </recommendedName>
    <alternativeName>
        <fullName evidence="1">PanK-III</fullName>
    </alternativeName>
    <alternativeName>
        <fullName evidence="1">Pantothenic acid kinase</fullName>
    </alternativeName>
</protein>
<reference key="1">
    <citation type="journal article" date="2002" name="Nature">
        <title>Complete genome sequence of the model actinomycete Streptomyces coelicolor A3(2).</title>
        <authorList>
            <person name="Bentley S.D."/>
            <person name="Chater K.F."/>
            <person name="Cerdeno-Tarraga A.-M."/>
            <person name="Challis G.L."/>
            <person name="Thomson N.R."/>
            <person name="James K.D."/>
            <person name="Harris D.E."/>
            <person name="Quail M.A."/>
            <person name="Kieser H."/>
            <person name="Harper D."/>
            <person name="Bateman A."/>
            <person name="Brown S."/>
            <person name="Chandra G."/>
            <person name="Chen C.W."/>
            <person name="Collins M."/>
            <person name="Cronin A."/>
            <person name="Fraser A."/>
            <person name="Goble A."/>
            <person name="Hidalgo J."/>
            <person name="Hornsby T."/>
            <person name="Howarth S."/>
            <person name="Huang C.-H."/>
            <person name="Kieser T."/>
            <person name="Larke L."/>
            <person name="Murphy L.D."/>
            <person name="Oliver K."/>
            <person name="O'Neil S."/>
            <person name="Rabbinowitsch E."/>
            <person name="Rajandream M.A."/>
            <person name="Rutherford K.M."/>
            <person name="Rutter S."/>
            <person name="Seeger K."/>
            <person name="Saunders D."/>
            <person name="Sharp S."/>
            <person name="Squares R."/>
            <person name="Squares S."/>
            <person name="Taylor K."/>
            <person name="Warren T."/>
            <person name="Wietzorrek A."/>
            <person name="Woodward J.R."/>
            <person name="Barrell B.G."/>
            <person name="Parkhill J."/>
            <person name="Hopwood D.A."/>
        </authorList>
    </citation>
    <scope>NUCLEOTIDE SEQUENCE [LARGE SCALE GENOMIC DNA]</scope>
    <source>
        <strain>ATCC BAA-471 / A3(2) / M145</strain>
    </source>
</reference>
<proteinExistence type="inferred from homology"/>
<accession>Q9X8N6</accession>
<name>COAX_STRCO</name>
<organism>
    <name type="scientific">Streptomyces coelicolor (strain ATCC BAA-471 / A3(2) / M145)</name>
    <dbReference type="NCBI Taxonomy" id="100226"/>
    <lineage>
        <taxon>Bacteria</taxon>
        <taxon>Bacillati</taxon>
        <taxon>Actinomycetota</taxon>
        <taxon>Actinomycetes</taxon>
        <taxon>Kitasatosporales</taxon>
        <taxon>Streptomycetaceae</taxon>
        <taxon>Streptomyces</taxon>
        <taxon>Streptomyces albidoflavus group</taxon>
    </lineage>
</organism>
<dbReference type="EC" id="2.7.1.33" evidence="1"/>
<dbReference type="EMBL" id="AL939116">
    <property type="protein sequence ID" value="CAB40880.1"/>
    <property type="molecule type" value="Genomic_DNA"/>
</dbReference>
<dbReference type="PIR" id="T36391">
    <property type="entry name" value="T36391"/>
</dbReference>
<dbReference type="RefSeq" id="NP_627588.1">
    <property type="nucleotide sequence ID" value="NC_003888.3"/>
</dbReference>
<dbReference type="RefSeq" id="WP_003975453.1">
    <property type="nucleotide sequence ID" value="NZ_VNID01000023.1"/>
</dbReference>
<dbReference type="SMR" id="Q9X8N6"/>
<dbReference type="FunCoup" id="Q9X8N6">
    <property type="interactions" value="153"/>
</dbReference>
<dbReference type="STRING" id="100226.gene:17761002"/>
<dbReference type="PaxDb" id="100226-SCO3380"/>
<dbReference type="KEGG" id="sco:SCO3380"/>
<dbReference type="PATRIC" id="fig|100226.15.peg.3443"/>
<dbReference type="eggNOG" id="COG1521">
    <property type="taxonomic scope" value="Bacteria"/>
</dbReference>
<dbReference type="HOGENOM" id="CLU_066627_1_0_11"/>
<dbReference type="InParanoid" id="Q9X8N6"/>
<dbReference type="OrthoDB" id="9804707at2"/>
<dbReference type="PhylomeDB" id="Q9X8N6"/>
<dbReference type="UniPathway" id="UPA00241">
    <property type="reaction ID" value="UER00352"/>
</dbReference>
<dbReference type="Proteomes" id="UP000001973">
    <property type="component" value="Chromosome"/>
</dbReference>
<dbReference type="GO" id="GO:0005737">
    <property type="term" value="C:cytoplasm"/>
    <property type="evidence" value="ECO:0007669"/>
    <property type="project" value="UniProtKB-SubCell"/>
</dbReference>
<dbReference type="GO" id="GO:0005524">
    <property type="term" value="F:ATP binding"/>
    <property type="evidence" value="ECO:0007669"/>
    <property type="project" value="UniProtKB-UniRule"/>
</dbReference>
<dbReference type="GO" id="GO:0046872">
    <property type="term" value="F:metal ion binding"/>
    <property type="evidence" value="ECO:0007669"/>
    <property type="project" value="UniProtKB-KW"/>
</dbReference>
<dbReference type="GO" id="GO:0004594">
    <property type="term" value="F:pantothenate kinase activity"/>
    <property type="evidence" value="ECO:0007669"/>
    <property type="project" value="UniProtKB-UniRule"/>
</dbReference>
<dbReference type="GO" id="GO:0015937">
    <property type="term" value="P:coenzyme A biosynthetic process"/>
    <property type="evidence" value="ECO:0007669"/>
    <property type="project" value="UniProtKB-UniRule"/>
</dbReference>
<dbReference type="CDD" id="cd24015">
    <property type="entry name" value="ASKHA_NBD_PanK-III"/>
    <property type="match status" value="1"/>
</dbReference>
<dbReference type="Gene3D" id="3.30.420.40">
    <property type="match status" value="2"/>
</dbReference>
<dbReference type="HAMAP" id="MF_01274">
    <property type="entry name" value="Pantothen_kinase_3"/>
    <property type="match status" value="1"/>
</dbReference>
<dbReference type="InterPro" id="IPR043129">
    <property type="entry name" value="ATPase_NBD"/>
</dbReference>
<dbReference type="InterPro" id="IPR004619">
    <property type="entry name" value="Type_III_PanK"/>
</dbReference>
<dbReference type="NCBIfam" id="TIGR00671">
    <property type="entry name" value="baf"/>
    <property type="match status" value="1"/>
</dbReference>
<dbReference type="NCBIfam" id="NF009845">
    <property type="entry name" value="PRK13318.1-3"/>
    <property type="match status" value="1"/>
</dbReference>
<dbReference type="NCBIfam" id="NF009855">
    <property type="entry name" value="PRK13321.1"/>
    <property type="match status" value="1"/>
</dbReference>
<dbReference type="PANTHER" id="PTHR34265">
    <property type="entry name" value="TYPE III PANTOTHENATE KINASE"/>
    <property type="match status" value="1"/>
</dbReference>
<dbReference type="PANTHER" id="PTHR34265:SF1">
    <property type="entry name" value="TYPE III PANTOTHENATE KINASE"/>
    <property type="match status" value="1"/>
</dbReference>
<dbReference type="Pfam" id="PF03309">
    <property type="entry name" value="Pan_kinase"/>
    <property type="match status" value="1"/>
</dbReference>
<dbReference type="SUPFAM" id="SSF53067">
    <property type="entry name" value="Actin-like ATPase domain"/>
    <property type="match status" value="2"/>
</dbReference>
<feature type="chain" id="PRO_0000267591" description="Type III pantothenate kinase">
    <location>
        <begin position="1"/>
        <end position="265"/>
    </location>
</feature>
<feature type="active site" description="Proton acceptor" evidence="1">
    <location>
        <position position="114"/>
    </location>
</feature>
<feature type="binding site" evidence="1">
    <location>
        <begin position="6"/>
        <end position="13"/>
    </location>
    <ligand>
        <name>ATP</name>
        <dbReference type="ChEBI" id="CHEBI:30616"/>
    </ligand>
</feature>
<feature type="binding site" evidence="1">
    <location>
        <begin position="112"/>
        <end position="115"/>
    </location>
    <ligand>
        <name>substrate</name>
    </ligand>
</feature>
<feature type="binding site" evidence="1">
    <location>
        <position position="134"/>
    </location>
    <ligand>
        <name>K(+)</name>
        <dbReference type="ChEBI" id="CHEBI:29103"/>
    </ligand>
</feature>
<feature type="binding site" evidence="1">
    <location>
        <position position="137"/>
    </location>
    <ligand>
        <name>ATP</name>
        <dbReference type="ChEBI" id="CHEBI:30616"/>
    </ligand>
</feature>
<feature type="binding site" evidence="1">
    <location>
        <position position="189"/>
    </location>
    <ligand>
        <name>substrate</name>
    </ligand>
</feature>
<evidence type="ECO:0000255" key="1">
    <source>
        <dbReference type="HAMAP-Rule" id="MF_01274"/>
    </source>
</evidence>